<proteinExistence type="inferred from homology"/>
<name>RS8_LEPBJ</name>
<evidence type="ECO:0000255" key="1">
    <source>
        <dbReference type="HAMAP-Rule" id="MF_01302"/>
    </source>
</evidence>
<evidence type="ECO:0000305" key="2"/>
<reference key="1">
    <citation type="journal article" date="2006" name="Proc. Natl. Acad. Sci. U.S.A.">
        <title>Genome reduction in Leptospira borgpetersenii reflects limited transmission potential.</title>
        <authorList>
            <person name="Bulach D.M."/>
            <person name="Zuerner R.L."/>
            <person name="Wilson P."/>
            <person name="Seemann T."/>
            <person name="McGrath A."/>
            <person name="Cullen P.A."/>
            <person name="Davis J."/>
            <person name="Johnson M."/>
            <person name="Kuczek E."/>
            <person name="Alt D.P."/>
            <person name="Peterson-Burch B."/>
            <person name="Coppel R.L."/>
            <person name="Rood J.I."/>
            <person name="Davies J.K."/>
            <person name="Adler B."/>
        </authorList>
    </citation>
    <scope>NUCLEOTIDE SEQUENCE [LARGE SCALE GENOMIC DNA]</scope>
    <source>
        <strain>JB197</strain>
    </source>
</reference>
<feature type="chain" id="PRO_0000290866" description="Small ribosomal subunit protein uS8">
    <location>
        <begin position="1"/>
        <end position="133"/>
    </location>
</feature>
<accession>Q04PV2</accession>
<organism>
    <name type="scientific">Leptospira borgpetersenii serovar Hardjo-bovis (strain JB197)</name>
    <dbReference type="NCBI Taxonomy" id="355277"/>
    <lineage>
        <taxon>Bacteria</taxon>
        <taxon>Pseudomonadati</taxon>
        <taxon>Spirochaetota</taxon>
        <taxon>Spirochaetia</taxon>
        <taxon>Leptospirales</taxon>
        <taxon>Leptospiraceae</taxon>
        <taxon>Leptospira</taxon>
    </lineage>
</organism>
<dbReference type="EMBL" id="CP000350">
    <property type="protein sequence ID" value="ABJ77068.1"/>
    <property type="molecule type" value="Genomic_DNA"/>
</dbReference>
<dbReference type="RefSeq" id="WP_011669438.1">
    <property type="nucleotide sequence ID" value="NC_008510.1"/>
</dbReference>
<dbReference type="SMR" id="Q04PV2"/>
<dbReference type="KEGG" id="lbj:LBJ_2645"/>
<dbReference type="HOGENOM" id="CLU_098428_0_2_12"/>
<dbReference type="Proteomes" id="UP000000656">
    <property type="component" value="Chromosome 1"/>
</dbReference>
<dbReference type="GO" id="GO:1990904">
    <property type="term" value="C:ribonucleoprotein complex"/>
    <property type="evidence" value="ECO:0007669"/>
    <property type="project" value="UniProtKB-KW"/>
</dbReference>
<dbReference type="GO" id="GO:0005840">
    <property type="term" value="C:ribosome"/>
    <property type="evidence" value="ECO:0007669"/>
    <property type="project" value="UniProtKB-KW"/>
</dbReference>
<dbReference type="GO" id="GO:0019843">
    <property type="term" value="F:rRNA binding"/>
    <property type="evidence" value="ECO:0007669"/>
    <property type="project" value="UniProtKB-UniRule"/>
</dbReference>
<dbReference type="GO" id="GO:0003735">
    <property type="term" value="F:structural constituent of ribosome"/>
    <property type="evidence" value="ECO:0007669"/>
    <property type="project" value="InterPro"/>
</dbReference>
<dbReference type="GO" id="GO:0006412">
    <property type="term" value="P:translation"/>
    <property type="evidence" value="ECO:0007669"/>
    <property type="project" value="UniProtKB-UniRule"/>
</dbReference>
<dbReference type="FunFam" id="3.30.1370.30:FF:000002">
    <property type="entry name" value="30S ribosomal protein S8"/>
    <property type="match status" value="1"/>
</dbReference>
<dbReference type="FunFam" id="3.30.1490.10:FF:000001">
    <property type="entry name" value="30S ribosomal protein S8"/>
    <property type="match status" value="1"/>
</dbReference>
<dbReference type="Gene3D" id="3.30.1370.30">
    <property type="match status" value="1"/>
</dbReference>
<dbReference type="Gene3D" id="3.30.1490.10">
    <property type="match status" value="1"/>
</dbReference>
<dbReference type="HAMAP" id="MF_01302_B">
    <property type="entry name" value="Ribosomal_uS8_B"/>
    <property type="match status" value="1"/>
</dbReference>
<dbReference type="InterPro" id="IPR000630">
    <property type="entry name" value="Ribosomal_uS8"/>
</dbReference>
<dbReference type="InterPro" id="IPR047863">
    <property type="entry name" value="Ribosomal_uS8_CS"/>
</dbReference>
<dbReference type="InterPro" id="IPR035987">
    <property type="entry name" value="Ribosomal_uS8_sf"/>
</dbReference>
<dbReference type="NCBIfam" id="NF001109">
    <property type="entry name" value="PRK00136.1"/>
    <property type="match status" value="1"/>
</dbReference>
<dbReference type="PANTHER" id="PTHR11758">
    <property type="entry name" value="40S RIBOSOMAL PROTEIN S15A"/>
    <property type="match status" value="1"/>
</dbReference>
<dbReference type="Pfam" id="PF00410">
    <property type="entry name" value="Ribosomal_S8"/>
    <property type="match status" value="1"/>
</dbReference>
<dbReference type="SUPFAM" id="SSF56047">
    <property type="entry name" value="Ribosomal protein S8"/>
    <property type="match status" value="1"/>
</dbReference>
<dbReference type="PROSITE" id="PS00053">
    <property type="entry name" value="RIBOSOMAL_S8"/>
    <property type="match status" value="1"/>
</dbReference>
<comment type="function">
    <text evidence="1">One of the primary rRNA binding proteins, it binds directly to 16S rRNA central domain where it helps coordinate assembly of the platform of the 30S subunit.</text>
</comment>
<comment type="subunit">
    <text evidence="1">Part of the 30S ribosomal subunit. Contacts proteins S5 and S12.</text>
</comment>
<comment type="similarity">
    <text evidence="1">Belongs to the universal ribosomal protein uS8 family.</text>
</comment>
<gene>
    <name evidence="1" type="primary">rpsH</name>
    <name type="ordered locus">LBJ_2645</name>
</gene>
<keyword id="KW-0687">Ribonucleoprotein</keyword>
<keyword id="KW-0689">Ribosomal protein</keyword>
<keyword id="KW-0694">RNA-binding</keyword>
<keyword id="KW-0699">rRNA-binding</keyword>
<sequence length="133" mass="15168">MSMSDPIGDMLTRIRNAGRAKHDTCLVPGSKIKKSILDLMKEEGFIRDYESVKVNETFEDYKVFLKYDQTKRPIIRELIRVSTPGRRVYIKSTEIRPYKNNIGTLIVSTSKGIMTGKNARKLKLGGEVILKMS</sequence>
<protein>
    <recommendedName>
        <fullName evidence="1">Small ribosomal subunit protein uS8</fullName>
    </recommendedName>
    <alternativeName>
        <fullName evidence="2">30S ribosomal protein S8</fullName>
    </alternativeName>
</protein>